<accession>B7J9S3</accession>
<protein>
    <recommendedName>
        <fullName evidence="1">Ribosomal RNA large subunit methyltransferase H</fullName>
        <ecNumber evidence="1">2.1.1.177</ecNumber>
    </recommendedName>
    <alternativeName>
        <fullName evidence="1">23S rRNA (pseudouridine1915-N3)-methyltransferase</fullName>
    </alternativeName>
    <alternativeName>
        <fullName evidence="1">23S rRNA m3Psi1915 methyltransferase</fullName>
    </alternativeName>
    <alternativeName>
        <fullName evidence="1">rRNA (pseudouridine-N3-)-methyltransferase RlmH</fullName>
    </alternativeName>
</protein>
<feature type="chain" id="PRO_1000131224" description="Ribosomal RNA large subunit methyltransferase H">
    <location>
        <begin position="1"/>
        <end position="157"/>
    </location>
</feature>
<feature type="binding site" evidence="1">
    <location>
        <position position="73"/>
    </location>
    <ligand>
        <name>S-adenosyl-L-methionine</name>
        <dbReference type="ChEBI" id="CHEBI:59789"/>
    </ligand>
</feature>
<feature type="binding site" evidence="1">
    <location>
        <position position="104"/>
    </location>
    <ligand>
        <name>S-adenosyl-L-methionine</name>
        <dbReference type="ChEBI" id="CHEBI:59789"/>
    </ligand>
</feature>
<feature type="binding site" evidence="1">
    <location>
        <begin position="121"/>
        <end position="126"/>
    </location>
    <ligand>
        <name>S-adenosyl-L-methionine</name>
        <dbReference type="ChEBI" id="CHEBI:59789"/>
    </ligand>
</feature>
<name>RLMH_ACIF2</name>
<gene>
    <name evidence="1" type="primary">rlmH</name>
    <name type="ordered locus">AFE_2950</name>
</gene>
<evidence type="ECO:0000255" key="1">
    <source>
        <dbReference type="HAMAP-Rule" id="MF_00658"/>
    </source>
</evidence>
<keyword id="KW-0963">Cytoplasm</keyword>
<keyword id="KW-0489">Methyltransferase</keyword>
<keyword id="KW-1185">Reference proteome</keyword>
<keyword id="KW-0698">rRNA processing</keyword>
<keyword id="KW-0949">S-adenosyl-L-methionine</keyword>
<keyword id="KW-0808">Transferase</keyword>
<dbReference type="EC" id="2.1.1.177" evidence="1"/>
<dbReference type="EMBL" id="CP001219">
    <property type="protein sequence ID" value="ACK80261.1"/>
    <property type="molecule type" value="Genomic_DNA"/>
</dbReference>
<dbReference type="RefSeq" id="WP_009560842.1">
    <property type="nucleotide sequence ID" value="NC_011761.1"/>
</dbReference>
<dbReference type="SMR" id="B7J9S3"/>
<dbReference type="STRING" id="243159.AFE_2950"/>
<dbReference type="PaxDb" id="243159-AFE_2950"/>
<dbReference type="GeneID" id="65281963"/>
<dbReference type="KEGG" id="afr:AFE_2950"/>
<dbReference type="eggNOG" id="COG1576">
    <property type="taxonomic scope" value="Bacteria"/>
</dbReference>
<dbReference type="HOGENOM" id="CLU_100552_1_0_6"/>
<dbReference type="Proteomes" id="UP000001362">
    <property type="component" value="Chromosome"/>
</dbReference>
<dbReference type="GO" id="GO:0005737">
    <property type="term" value="C:cytoplasm"/>
    <property type="evidence" value="ECO:0007669"/>
    <property type="project" value="UniProtKB-SubCell"/>
</dbReference>
<dbReference type="GO" id="GO:0070038">
    <property type="term" value="F:rRNA (pseudouridine-N3-)-methyltransferase activity"/>
    <property type="evidence" value="ECO:0007669"/>
    <property type="project" value="UniProtKB-UniRule"/>
</dbReference>
<dbReference type="CDD" id="cd18081">
    <property type="entry name" value="RlmH-like"/>
    <property type="match status" value="1"/>
</dbReference>
<dbReference type="Gene3D" id="3.40.1280.10">
    <property type="match status" value="1"/>
</dbReference>
<dbReference type="HAMAP" id="MF_00658">
    <property type="entry name" value="23SrRNA_methyltr_H"/>
    <property type="match status" value="1"/>
</dbReference>
<dbReference type="InterPro" id="IPR029028">
    <property type="entry name" value="Alpha/beta_knot_MTases"/>
</dbReference>
<dbReference type="InterPro" id="IPR003742">
    <property type="entry name" value="RlmH-like"/>
</dbReference>
<dbReference type="InterPro" id="IPR029026">
    <property type="entry name" value="tRNA_m1G_MTases_N"/>
</dbReference>
<dbReference type="NCBIfam" id="NF000986">
    <property type="entry name" value="PRK00103.1-4"/>
    <property type="match status" value="1"/>
</dbReference>
<dbReference type="PANTHER" id="PTHR33603">
    <property type="entry name" value="METHYLTRANSFERASE"/>
    <property type="match status" value="1"/>
</dbReference>
<dbReference type="PANTHER" id="PTHR33603:SF1">
    <property type="entry name" value="RIBOSOMAL RNA LARGE SUBUNIT METHYLTRANSFERASE H"/>
    <property type="match status" value="1"/>
</dbReference>
<dbReference type="Pfam" id="PF02590">
    <property type="entry name" value="SPOUT_MTase"/>
    <property type="match status" value="1"/>
</dbReference>
<dbReference type="PIRSF" id="PIRSF004505">
    <property type="entry name" value="MT_bac"/>
    <property type="match status" value="1"/>
</dbReference>
<dbReference type="SUPFAM" id="SSF75217">
    <property type="entry name" value="alpha/beta knot"/>
    <property type="match status" value="1"/>
</dbReference>
<proteinExistence type="inferred from homology"/>
<organism>
    <name type="scientific">Acidithiobacillus ferrooxidans (strain ATCC 23270 / DSM 14882 / CIP 104768 / NCIMB 8455)</name>
    <name type="common">Ferrobacillus ferrooxidans (strain ATCC 23270)</name>
    <dbReference type="NCBI Taxonomy" id="243159"/>
    <lineage>
        <taxon>Bacteria</taxon>
        <taxon>Pseudomonadati</taxon>
        <taxon>Pseudomonadota</taxon>
        <taxon>Acidithiobacillia</taxon>
        <taxon>Acidithiobacillales</taxon>
        <taxon>Acidithiobacillaceae</taxon>
        <taxon>Acidithiobacillus</taxon>
    </lineage>
</organism>
<reference key="1">
    <citation type="journal article" date="2008" name="BMC Genomics">
        <title>Acidithiobacillus ferrooxidans metabolism: from genome sequence to industrial applications.</title>
        <authorList>
            <person name="Valdes J."/>
            <person name="Pedroso I."/>
            <person name="Quatrini R."/>
            <person name="Dodson R.J."/>
            <person name="Tettelin H."/>
            <person name="Blake R. II"/>
            <person name="Eisen J.A."/>
            <person name="Holmes D.S."/>
        </authorList>
    </citation>
    <scope>NUCLEOTIDE SEQUENCE [LARGE SCALE GENOMIC DNA]</scope>
    <source>
        <strain>ATCC 23270 / DSM 14882 / CIP 104768 / NCIMB 8455</strain>
    </source>
</reference>
<sequence>MRLWVLAIGSKMPAWVEAGVAEYSARMPPQLRVEWRGLPLARRGRSGDPVRWRREEGERILAATPAGAERIALEVNGRNLDSEALAQRIDTWFHSGRDVALWVGGPDGLDPALQPDWRWSLSPLTLAHPVVRVVLAEQLYRAWSIQAGLPYHRGGEE</sequence>
<comment type="function">
    <text evidence="1">Specifically methylates the pseudouridine at position 1915 (m3Psi1915) in 23S rRNA.</text>
</comment>
<comment type="catalytic activity">
    <reaction evidence="1">
        <text>pseudouridine(1915) in 23S rRNA + S-adenosyl-L-methionine = N(3)-methylpseudouridine(1915) in 23S rRNA + S-adenosyl-L-homocysteine + H(+)</text>
        <dbReference type="Rhea" id="RHEA:42752"/>
        <dbReference type="Rhea" id="RHEA-COMP:10221"/>
        <dbReference type="Rhea" id="RHEA-COMP:10222"/>
        <dbReference type="ChEBI" id="CHEBI:15378"/>
        <dbReference type="ChEBI" id="CHEBI:57856"/>
        <dbReference type="ChEBI" id="CHEBI:59789"/>
        <dbReference type="ChEBI" id="CHEBI:65314"/>
        <dbReference type="ChEBI" id="CHEBI:74486"/>
        <dbReference type="EC" id="2.1.1.177"/>
    </reaction>
</comment>
<comment type="subunit">
    <text evidence="1">Homodimer.</text>
</comment>
<comment type="subcellular location">
    <subcellularLocation>
        <location evidence="1">Cytoplasm</location>
    </subcellularLocation>
</comment>
<comment type="similarity">
    <text evidence="1">Belongs to the RNA methyltransferase RlmH family.</text>
</comment>